<proteinExistence type="inferred from homology"/>
<sequence>MWFRQLALFRLPPDARPDLAKLEAGMEQHCFAPPSGLEWSSQGFVAPAGHAPDRLLHPLAGGALATLKREDKVLPAAVIRDVLESKVADIEAREARPVGRKEKRELKEQVTDDLLPRAFTKTGRTRALLDVQAGWILVDAAGQKAEALVSALREALPPFPARLPHTQLSPGSAMTGWLAGEVPDGFELDCDCELKSPGDDGATVRCSKQDLTAPEVRQHLDTGKVVTRLGLVWQERIRFVLTEQLELKRLQFLDVLEEQASQAGDDAPALFDATATLMLGELRHLVADLIAALGGETEA</sequence>
<evidence type="ECO:0000255" key="1">
    <source>
        <dbReference type="HAMAP-Rule" id="MF_00194"/>
    </source>
</evidence>
<dbReference type="EMBL" id="CP001154">
    <property type="protein sequence ID" value="ACO73713.1"/>
    <property type="molecule type" value="Genomic_DNA"/>
</dbReference>
<dbReference type="RefSeq" id="WP_012696205.1">
    <property type="nucleotide sequence ID" value="NC_012559.1"/>
</dbReference>
<dbReference type="SMR" id="C1D4B9"/>
<dbReference type="STRING" id="557598.LHK_00720"/>
<dbReference type="KEGG" id="lhk:LHK_00720"/>
<dbReference type="eggNOG" id="COG2974">
    <property type="taxonomic scope" value="Bacteria"/>
</dbReference>
<dbReference type="HOGENOM" id="CLU_052038_1_1_4"/>
<dbReference type="Proteomes" id="UP000002010">
    <property type="component" value="Chromosome"/>
</dbReference>
<dbReference type="GO" id="GO:0043590">
    <property type="term" value="C:bacterial nucleoid"/>
    <property type="evidence" value="ECO:0007669"/>
    <property type="project" value="TreeGrafter"/>
</dbReference>
<dbReference type="GO" id="GO:0005737">
    <property type="term" value="C:cytoplasm"/>
    <property type="evidence" value="ECO:0007669"/>
    <property type="project" value="UniProtKB-UniRule"/>
</dbReference>
<dbReference type="GO" id="GO:0003690">
    <property type="term" value="F:double-stranded DNA binding"/>
    <property type="evidence" value="ECO:0007669"/>
    <property type="project" value="TreeGrafter"/>
</dbReference>
<dbReference type="GO" id="GO:0006310">
    <property type="term" value="P:DNA recombination"/>
    <property type="evidence" value="ECO:0007669"/>
    <property type="project" value="UniProtKB-UniRule"/>
</dbReference>
<dbReference type="GO" id="GO:0000018">
    <property type="term" value="P:regulation of DNA recombination"/>
    <property type="evidence" value="ECO:0007669"/>
    <property type="project" value="TreeGrafter"/>
</dbReference>
<dbReference type="HAMAP" id="MF_00194">
    <property type="entry name" value="RdgC"/>
    <property type="match status" value="1"/>
</dbReference>
<dbReference type="InterPro" id="IPR007476">
    <property type="entry name" value="RdgC"/>
</dbReference>
<dbReference type="NCBIfam" id="NF001464">
    <property type="entry name" value="PRK00321.1-5"/>
    <property type="match status" value="1"/>
</dbReference>
<dbReference type="PANTHER" id="PTHR38103">
    <property type="entry name" value="RECOMBINATION-ASSOCIATED PROTEIN RDGC"/>
    <property type="match status" value="1"/>
</dbReference>
<dbReference type="PANTHER" id="PTHR38103:SF1">
    <property type="entry name" value="RECOMBINATION-ASSOCIATED PROTEIN RDGC"/>
    <property type="match status" value="1"/>
</dbReference>
<dbReference type="Pfam" id="PF04381">
    <property type="entry name" value="RdgC"/>
    <property type="match status" value="1"/>
</dbReference>
<comment type="function">
    <text evidence="1">May be involved in recombination.</text>
</comment>
<comment type="subcellular location">
    <subcellularLocation>
        <location evidence="1">Cytoplasm</location>
        <location evidence="1">Nucleoid</location>
    </subcellularLocation>
</comment>
<comment type="similarity">
    <text evidence="1">Belongs to the RdgC family.</text>
</comment>
<name>RDGC_LARHH</name>
<feature type="chain" id="PRO_1000193277" description="Recombination-associated protein RdgC">
    <location>
        <begin position="1"/>
        <end position="299"/>
    </location>
</feature>
<organism>
    <name type="scientific">Laribacter hongkongensis (strain HLHK9)</name>
    <dbReference type="NCBI Taxonomy" id="557598"/>
    <lineage>
        <taxon>Bacteria</taxon>
        <taxon>Pseudomonadati</taxon>
        <taxon>Pseudomonadota</taxon>
        <taxon>Betaproteobacteria</taxon>
        <taxon>Neisseriales</taxon>
        <taxon>Aquaspirillaceae</taxon>
        <taxon>Laribacter</taxon>
    </lineage>
</organism>
<protein>
    <recommendedName>
        <fullName evidence="1">Recombination-associated protein RdgC</fullName>
    </recommendedName>
</protein>
<accession>C1D4B9</accession>
<keyword id="KW-0963">Cytoplasm</keyword>
<keyword id="KW-0233">DNA recombination</keyword>
<keyword id="KW-1185">Reference proteome</keyword>
<gene>
    <name evidence="1" type="primary">rdgC</name>
    <name type="ordered locus">LHK_00720</name>
</gene>
<reference key="1">
    <citation type="journal article" date="2009" name="PLoS Genet.">
        <title>The complete genome and proteome of Laribacter hongkongensis reveal potential mechanisms for adaptations to different temperatures and habitats.</title>
        <authorList>
            <person name="Woo P.C.Y."/>
            <person name="Lau S.K.P."/>
            <person name="Tse H."/>
            <person name="Teng J.L.L."/>
            <person name="Curreem S.O."/>
            <person name="Tsang A.K.L."/>
            <person name="Fan R.Y.Y."/>
            <person name="Wong G.K.M."/>
            <person name="Huang Y."/>
            <person name="Loman N.J."/>
            <person name="Snyder L.A.S."/>
            <person name="Cai J.J."/>
            <person name="Huang J.-D."/>
            <person name="Mak W."/>
            <person name="Pallen M.J."/>
            <person name="Lok S."/>
            <person name="Yuen K.-Y."/>
        </authorList>
    </citation>
    <scope>NUCLEOTIDE SEQUENCE [LARGE SCALE GENOMIC DNA]</scope>
    <source>
        <strain>HLHK9</strain>
    </source>
</reference>